<accession>Q62JW5</accession>
<comment type="catalytic activity">
    <reaction evidence="1">
        <text>tRNA(His) + L-histidine + ATP = L-histidyl-tRNA(His) + AMP + diphosphate + H(+)</text>
        <dbReference type="Rhea" id="RHEA:17313"/>
        <dbReference type="Rhea" id="RHEA-COMP:9665"/>
        <dbReference type="Rhea" id="RHEA-COMP:9689"/>
        <dbReference type="ChEBI" id="CHEBI:15378"/>
        <dbReference type="ChEBI" id="CHEBI:30616"/>
        <dbReference type="ChEBI" id="CHEBI:33019"/>
        <dbReference type="ChEBI" id="CHEBI:57595"/>
        <dbReference type="ChEBI" id="CHEBI:78442"/>
        <dbReference type="ChEBI" id="CHEBI:78527"/>
        <dbReference type="ChEBI" id="CHEBI:456215"/>
        <dbReference type="EC" id="6.1.1.21"/>
    </reaction>
</comment>
<comment type="subunit">
    <text evidence="1">Homodimer.</text>
</comment>
<comment type="subcellular location">
    <subcellularLocation>
        <location evidence="1">Cytoplasm</location>
    </subcellularLocation>
</comment>
<comment type="similarity">
    <text evidence="1">Belongs to the class-II aminoacyl-tRNA synthetase family.</text>
</comment>
<reference key="1">
    <citation type="journal article" date="2004" name="Proc. Natl. Acad. Sci. U.S.A.">
        <title>Structural flexibility in the Burkholderia mallei genome.</title>
        <authorList>
            <person name="Nierman W.C."/>
            <person name="DeShazer D."/>
            <person name="Kim H.S."/>
            <person name="Tettelin H."/>
            <person name="Nelson K.E."/>
            <person name="Feldblyum T.V."/>
            <person name="Ulrich R.L."/>
            <person name="Ronning C.M."/>
            <person name="Brinkac L.M."/>
            <person name="Daugherty S.C."/>
            <person name="Davidsen T.D."/>
            <person name="DeBoy R.T."/>
            <person name="Dimitrov G."/>
            <person name="Dodson R.J."/>
            <person name="Durkin A.S."/>
            <person name="Gwinn M.L."/>
            <person name="Haft D.H."/>
            <person name="Khouri H.M."/>
            <person name="Kolonay J.F."/>
            <person name="Madupu R."/>
            <person name="Mohammoud Y."/>
            <person name="Nelson W.C."/>
            <person name="Radune D."/>
            <person name="Romero C.M."/>
            <person name="Sarria S."/>
            <person name="Selengut J."/>
            <person name="Shamblin C."/>
            <person name="Sullivan S.A."/>
            <person name="White O."/>
            <person name="Yu Y."/>
            <person name="Zafar N."/>
            <person name="Zhou L."/>
            <person name="Fraser C.M."/>
        </authorList>
    </citation>
    <scope>NUCLEOTIDE SEQUENCE [LARGE SCALE GENOMIC DNA]</scope>
    <source>
        <strain>ATCC 23344</strain>
    </source>
</reference>
<evidence type="ECO:0000255" key="1">
    <source>
        <dbReference type="HAMAP-Rule" id="MF_00127"/>
    </source>
</evidence>
<organism>
    <name type="scientific">Burkholderia mallei (strain ATCC 23344)</name>
    <dbReference type="NCBI Taxonomy" id="243160"/>
    <lineage>
        <taxon>Bacteria</taxon>
        <taxon>Pseudomonadati</taxon>
        <taxon>Pseudomonadota</taxon>
        <taxon>Betaproteobacteria</taxon>
        <taxon>Burkholderiales</taxon>
        <taxon>Burkholderiaceae</taxon>
        <taxon>Burkholderia</taxon>
        <taxon>pseudomallei group</taxon>
    </lineage>
</organism>
<dbReference type="EC" id="6.1.1.21" evidence="1"/>
<dbReference type="EMBL" id="CP000010">
    <property type="protein sequence ID" value="AAU47557.1"/>
    <property type="molecule type" value="Genomic_DNA"/>
</dbReference>
<dbReference type="RefSeq" id="WP_004191559.1">
    <property type="nucleotide sequence ID" value="NC_006348.1"/>
</dbReference>
<dbReference type="RefSeq" id="YP_103004.1">
    <property type="nucleotide sequence ID" value="NC_006348.1"/>
</dbReference>
<dbReference type="SMR" id="Q62JW5"/>
<dbReference type="GeneID" id="92979077"/>
<dbReference type="KEGG" id="bma:BMA1344"/>
<dbReference type="PATRIC" id="fig|243160.12.peg.1383"/>
<dbReference type="eggNOG" id="COG0124">
    <property type="taxonomic scope" value="Bacteria"/>
</dbReference>
<dbReference type="HOGENOM" id="CLU_025113_1_1_4"/>
<dbReference type="Proteomes" id="UP000006693">
    <property type="component" value="Chromosome 1"/>
</dbReference>
<dbReference type="GO" id="GO:0005737">
    <property type="term" value="C:cytoplasm"/>
    <property type="evidence" value="ECO:0007669"/>
    <property type="project" value="UniProtKB-SubCell"/>
</dbReference>
<dbReference type="GO" id="GO:0005524">
    <property type="term" value="F:ATP binding"/>
    <property type="evidence" value="ECO:0007669"/>
    <property type="project" value="UniProtKB-UniRule"/>
</dbReference>
<dbReference type="GO" id="GO:0004821">
    <property type="term" value="F:histidine-tRNA ligase activity"/>
    <property type="evidence" value="ECO:0007669"/>
    <property type="project" value="UniProtKB-UniRule"/>
</dbReference>
<dbReference type="GO" id="GO:0006427">
    <property type="term" value="P:histidyl-tRNA aminoacylation"/>
    <property type="evidence" value="ECO:0007669"/>
    <property type="project" value="UniProtKB-UniRule"/>
</dbReference>
<dbReference type="CDD" id="cd00773">
    <property type="entry name" value="HisRS-like_core"/>
    <property type="match status" value="1"/>
</dbReference>
<dbReference type="CDD" id="cd00859">
    <property type="entry name" value="HisRS_anticodon"/>
    <property type="match status" value="1"/>
</dbReference>
<dbReference type="FunFam" id="3.30.930.10:FF:000005">
    <property type="entry name" value="Histidine--tRNA ligase"/>
    <property type="match status" value="1"/>
</dbReference>
<dbReference type="Gene3D" id="3.40.50.800">
    <property type="entry name" value="Anticodon-binding domain"/>
    <property type="match status" value="1"/>
</dbReference>
<dbReference type="Gene3D" id="3.30.930.10">
    <property type="entry name" value="Bira Bifunctional Protein, Domain 2"/>
    <property type="match status" value="1"/>
</dbReference>
<dbReference type="HAMAP" id="MF_00127">
    <property type="entry name" value="His_tRNA_synth"/>
    <property type="match status" value="1"/>
</dbReference>
<dbReference type="InterPro" id="IPR006195">
    <property type="entry name" value="aa-tRNA-synth_II"/>
</dbReference>
<dbReference type="InterPro" id="IPR045864">
    <property type="entry name" value="aa-tRNA-synth_II/BPL/LPL"/>
</dbReference>
<dbReference type="InterPro" id="IPR004154">
    <property type="entry name" value="Anticodon-bd"/>
</dbReference>
<dbReference type="InterPro" id="IPR036621">
    <property type="entry name" value="Anticodon-bd_dom_sf"/>
</dbReference>
<dbReference type="InterPro" id="IPR015807">
    <property type="entry name" value="His-tRNA-ligase"/>
</dbReference>
<dbReference type="InterPro" id="IPR041715">
    <property type="entry name" value="HisRS-like_core"/>
</dbReference>
<dbReference type="InterPro" id="IPR004516">
    <property type="entry name" value="HisRS/HisZ"/>
</dbReference>
<dbReference type="InterPro" id="IPR033656">
    <property type="entry name" value="HisRS_anticodon"/>
</dbReference>
<dbReference type="NCBIfam" id="TIGR00442">
    <property type="entry name" value="hisS"/>
    <property type="match status" value="1"/>
</dbReference>
<dbReference type="PANTHER" id="PTHR43707:SF1">
    <property type="entry name" value="HISTIDINE--TRNA LIGASE, MITOCHONDRIAL-RELATED"/>
    <property type="match status" value="1"/>
</dbReference>
<dbReference type="PANTHER" id="PTHR43707">
    <property type="entry name" value="HISTIDYL-TRNA SYNTHETASE"/>
    <property type="match status" value="1"/>
</dbReference>
<dbReference type="Pfam" id="PF03129">
    <property type="entry name" value="HGTP_anticodon"/>
    <property type="match status" value="1"/>
</dbReference>
<dbReference type="Pfam" id="PF13393">
    <property type="entry name" value="tRNA-synt_His"/>
    <property type="match status" value="1"/>
</dbReference>
<dbReference type="PIRSF" id="PIRSF001549">
    <property type="entry name" value="His-tRNA_synth"/>
    <property type="match status" value="1"/>
</dbReference>
<dbReference type="SUPFAM" id="SSF52954">
    <property type="entry name" value="Class II aaRS ABD-related"/>
    <property type="match status" value="1"/>
</dbReference>
<dbReference type="SUPFAM" id="SSF55681">
    <property type="entry name" value="Class II aaRS and biotin synthetases"/>
    <property type="match status" value="1"/>
</dbReference>
<dbReference type="PROSITE" id="PS50862">
    <property type="entry name" value="AA_TRNA_LIGASE_II"/>
    <property type="match status" value="1"/>
</dbReference>
<name>SYH_BURMA</name>
<sequence length="446" mass="49600">MTEQKRKLEKLTGVKGMNDILPQDAGLWEFFEATVKSLLRAYGYQNIRTPIVEHTQLFTRGIGEVTDIVEKEMYSFVDALNGENLTLRPENTAAVVRAAIEHNMLYDGPKRLWYLGPMFRHERPQRGRYRQFHQVGVEALGFAGPDADAEIIMMCQRLWDDLGLTGIKLEINSLGLAEERAAHRVELIKYLEQHVDKLDDDAQRRLYTNPLRVLDTKNPALQEIVRNAPQLIDFLGDVSRAHFDGLQQLLKANNLPFTINPRLVRGLDYYNLTVFEWVTDKLGAQGTVAAGGRYDPLIEQLGGKPTAACGWAMGVERILELLKEEHLVPEQEGVDVYVVHQGDAAREQAFIVAERLRDTGLDVILHCSADGAGASFKSQMKRADASGAAFAVIFGEDEVANGTVSVKPLRGTGAEGEKNVQQSVPVESLTEFLINAMVATAEDGDD</sequence>
<protein>
    <recommendedName>
        <fullName evidence="1">Histidine--tRNA ligase</fullName>
        <ecNumber evidence="1">6.1.1.21</ecNumber>
    </recommendedName>
    <alternativeName>
        <fullName evidence="1">Histidyl-tRNA synthetase</fullName>
        <shortName evidence="1">HisRS</shortName>
    </alternativeName>
</protein>
<feature type="chain" id="PRO_0000136129" description="Histidine--tRNA ligase">
    <location>
        <begin position="1"/>
        <end position="446"/>
    </location>
</feature>
<gene>
    <name evidence="1" type="primary">hisS</name>
    <name type="ordered locus">BMA1344</name>
</gene>
<keyword id="KW-0030">Aminoacyl-tRNA synthetase</keyword>
<keyword id="KW-0067">ATP-binding</keyword>
<keyword id="KW-0963">Cytoplasm</keyword>
<keyword id="KW-0436">Ligase</keyword>
<keyword id="KW-0547">Nucleotide-binding</keyword>
<keyword id="KW-0648">Protein biosynthesis</keyword>
<keyword id="KW-1185">Reference proteome</keyword>
<proteinExistence type="inferred from homology"/>